<proteinExistence type="inferred from homology"/>
<dbReference type="EMBL" id="CU329671">
    <property type="protein sequence ID" value="CAA21248.1"/>
    <property type="molecule type" value="Genomic_DNA"/>
</dbReference>
<dbReference type="PIR" id="T39637">
    <property type="entry name" value="T39637"/>
</dbReference>
<dbReference type="RefSeq" id="NP_595442.1">
    <property type="nucleotide sequence ID" value="NM_001021351.2"/>
</dbReference>
<dbReference type="SMR" id="O74734"/>
<dbReference type="BioGRID" id="276727">
    <property type="interactions" value="19"/>
</dbReference>
<dbReference type="FunCoup" id="O74734">
    <property type="interactions" value="206"/>
</dbReference>
<dbReference type="STRING" id="284812.O74734"/>
<dbReference type="iPTMnet" id="O74734"/>
<dbReference type="PaxDb" id="4896-SPBC1709.09.1"/>
<dbReference type="EnsemblFungi" id="SPBC1709.09.1">
    <property type="protein sequence ID" value="SPBC1709.09.1:pep"/>
    <property type="gene ID" value="SPBC1709.09"/>
</dbReference>
<dbReference type="GeneID" id="2540194"/>
<dbReference type="KEGG" id="spo:2540194"/>
<dbReference type="PomBase" id="SPBC1709.09">
    <property type="gene designation" value="rrf1"/>
</dbReference>
<dbReference type="VEuPathDB" id="FungiDB:SPBC1709.09"/>
<dbReference type="eggNOG" id="KOG4759">
    <property type="taxonomic scope" value="Eukaryota"/>
</dbReference>
<dbReference type="HOGENOM" id="CLU_1138568_0_0_1"/>
<dbReference type="InParanoid" id="O74734"/>
<dbReference type="OMA" id="PYEESYM"/>
<dbReference type="PRO" id="PR:O74734"/>
<dbReference type="Proteomes" id="UP000002485">
    <property type="component" value="Chromosome II"/>
</dbReference>
<dbReference type="GO" id="GO:0005759">
    <property type="term" value="C:mitochondrial matrix"/>
    <property type="evidence" value="ECO:0000305"/>
    <property type="project" value="PomBase"/>
</dbReference>
<dbReference type="GO" id="GO:0005739">
    <property type="term" value="C:mitochondrion"/>
    <property type="evidence" value="ECO:0000316"/>
    <property type="project" value="PomBase"/>
</dbReference>
<dbReference type="GO" id="GO:0043023">
    <property type="term" value="F:ribosomal large subunit binding"/>
    <property type="evidence" value="ECO:0000318"/>
    <property type="project" value="GO_Central"/>
</dbReference>
<dbReference type="GO" id="GO:0008079">
    <property type="term" value="F:translation termination factor activity"/>
    <property type="evidence" value="ECO:0000250"/>
    <property type="project" value="PomBase"/>
</dbReference>
<dbReference type="GO" id="GO:0070126">
    <property type="term" value="P:mitochondrial translational termination"/>
    <property type="evidence" value="ECO:0000316"/>
    <property type="project" value="PomBase"/>
</dbReference>
<dbReference type="GO" id="GO:0032790">
    <property type="term" value="P:ribosome disassembly"/>
    <property type="evidence" value="ECO:0000250"/>
    <property type="project" value="PomBase"/>
</dbReference>
<dbReference type="GO" id="GO:0006412">
    <property type="term" value="P:translation"/>
    <property type="evidence" value="ECO:0000318"/>
    <property type="project" value="GO_Central"/>
</dbReference>
<dbReference type="Gene3D" id="3.30.1360.40">
    <property type="match status" value="1"/>
</dbReference>
<dbReference type="Gene3D" id="1.10.132.20">
    <property type="entry name" value="Ribosome-recycling factor"/>
    <property type="match status" value="1"/>
</dbReference>
<dbReference type="InterPro" id="IPR002661">
    <property type="entry name" value="Ribosome_recyc_fac"/>
</dbReference>
<dbReference type="InterPro" id="IPR023584">
    <property type="entry name" value="Ribosome_recyc_fac_dom"/>
</dbReference>
<dbReference type="InterPro" id="IPR036191">
    <property type="entry name" value="RRF_sf"/>
</dbReference>
<dbReference type="PANTHER" id="PTHR20982:SF3">
    <property type="entry name" value="MITOCHONDRIAL RIBOSOME RECYCLING FACTOR PSEUDO 1"/>
    <property type="match status" value="1"/>
</dbReference>
<dbReference type="PANTHER" id="PTHR20982">
    <property type="entry name" value="RIBOSOME RECYCLING FACTOR"/>
    <property type="match status" value="1"/>
</dbReference>
<dbReference type="Pfam" id="PF01765">
    <property type="entry name" value="RRF"/>
    <property type="match status" value="1"/>
</dbReference>
<dbReference type="SUPFAM" id="SSF55194">
    <property type="entry name" value="Ribosome recycling factor, RRF"/>
    <property type="match status" value="1"/>
</dbReference>
<feature type="transit peptide" description="Mitochondrion" evidence="2">
    <location>
        <begin position="1"/>
        <end status="unknown"/>
    </location>
</feature>
<feature type="chain" id="PRO_0000372618" description="Putative ribosomal recycling factor, mitochondrial">
    <location>
        <begin status="unknown"/>
        <end position="244"/>
    </location>
</feature>
<comment type="function">
    <text evidence="1">Necessary for protein synthesis in mitochondria. Functions as a ribosome recycling factor in mitochondria.</text>
</comment>
<comment type="subcellular location">
    <subcellularLocation>
        <location evidence="3">Mitochondrion</location>
    </subcellularLocation>
</comment>
<comment type="similarity">
    <text evidence="4">Belongs to the RRF family.</text>
</comment>
<name>RRF1_SCHPO</name>
<reference key="1">
    <citation type="journal article" date="2002" name="Nature">
        <title>The genome sequence of Schizosaccharomyces pombe.</title>
        <authorList>
            <person name="Wood V."/>
            <person name="Gwilliam R."/>
            <person name="Rajandream M.A."/>
            <person name="Lyne M.H."/>
            <person name="Lyne R."/>
            <person name="Stewart A."/>
            <person name="Sgouros J.G."/>
            <person name="Peat N."/>
            <person name="Hayles J."/>
            <person name="Baker S.G."/>
            <person name="Basham D."/>
            <person name="Bowman S."/>
            <person name="Brooks K."/>
            <person name="Brown D."/>
            <person name="Brown S."/>
            <person name="Chillingworth T."/>
            <person name="Churcher C.M."/>
            <person name="Collins M."/>
            <person name="Connor R."/>
            <person name="Cronin A."/>
            <person name="Davis P."/>
            <person name="Feltwell T."/>
            <person name="Fraser A."/>
            <person name="Gentles S."/>
            <person name="Goble A."/>
            <person name="Hamlin N."/>
            <person name="Harris D.E."/>
            <person name="Hidalgo J."/>
            <person name="Hodgson G."/>
            <person name="Holroyd S."/>
            <person name="Hornsby T."/>
            <person name="Howarth S."/>
            <person name="Huckle E.J."/>
            <person name="Hunt S."/>
            <person name="Jagels K."/>
            <person name="James K.D."/>
            <person name="Jones L."/>
            <person name="Jones M."/>
            <person name="Leather S."/>
            <person name="McDonald S."/>
            <person name="McLean J."/>
            <person name="Mooney P."/>
            <person name="Moule S."/>
            <person name="Mungall K.L."/>
            <person name="Murphy L.D."/>
            <person name="Niblett D."/>
            <person name="Odell C."/>
            <person name="Oliver K."/>
            <person name="O'Neil S."/>
            <person name="Pearson D."/>
            <person name="Quail M.A."/>
            <person name="Rabbinowitsch E."/>
            <person name="Rutherford K.M."/>
            <person name="Rutter S."/>
            <person name="Saunders D."/>
            <person name="Seeger K."/>
            <person name="Sharp S."/>
            <person name="Skelton J."/>
            <person name="Simmonds M.N."/>
            <person name="Squares R."/>
            <person name="Squares S."/>
            <person name="Stevens K."/>
            <person name="Taylor K."/>
            <person name="Taylor R.G."/>
            <person name="Tivey A."/>
            <person name="Walsh S.V."/>
            <person name="Warren T."/>
            <person name="Whitehead S."/>
            <person name="Woodward J.R."/>
            <person name="Volckaert G."/>
            <person name="Aert R."/>
            <person name="Robben J."/>
            <person name="Grymonprez B."/>
            <person name="Weltjens I."/>
            <person name="Vanstreels E."/>
            <person name="Rieger M."/>
            <person name="Schaefer M."/>
            <person name="Mueller-Auer S."/>
            <person name="Gabel C."/>
            <person name="Fuchs M."/>
            <person name="Duesterhoeft A."/>
            <person name="Fritzc C."/>
            <person name="Holzer E."/>
            <person name="Moestl D."/>
            <person name="Hilbert H."/>
            <person name="Borzym K."/>
            <person name="Langer I."/>
            <person name="Beck A."/>
            <person name="Lehrach H."/>
            <person name="Reinhardt R."/>
            <person name="Pohl T.M."/>
            <person name="Eger P."/>
            <person name="Zimmermann W."/>
            <person name="Wedler H."/>
            <person name="Wambutt R."/>
            <person name="Purnelle B."/>
            <person name="Goffeau A."/>
            <person name="Cadieu E."/>
            <person name="Dreano S."/>
            <person name="Gloux S."/>
            <person name="Lelaure V."/>
            <person name="Mottier S."/>
            <person name="Galibert F."/>
            <person name="Aves S.J."/>
            <person name="Xiang Z."/>
            <person name="Hunt C."/>
            <person name="Moore K."/>
            <person name="Hurst S.M."/>
            <person name="Lucas M."/>
            <person name="Rochet M."/>
            <person name="Gaillardin C."/>
            <person name="Tallada V.A."/>
            <person name="Garzon A."/>
            <person name="Thode G."/>
            <person name="Daga R.R."/>
            <person name="Cruzado L."/>
            <person name="Jimenez J."/>
            <person name="Sanchez M."/>
            <person name="del Rey F."/>
            <person name="Benito J."/>
            <person name="Dominguez A."/>
            <person name="Revuelta J.L."/>
            <person name="Moreno S."/>
            <person name="Armstrong J."/>
            <person name="Forsburg S.L."/>
            <person name="Cerutti L."/>
            <person name="Lowe T."/>
            <person name="McCombie W.R."/>
            <person name="Paulsen I."/>
            <person name="Potashkin J."/>
            <person name="Shpakovski G.V."/>
            <person name="Ussery D."/>
            <person name="Barrell B.G."/>
            <person name="Nurse P."/>
        </authorList>
    </citation>
    <scope>NUCLEOTIDE SEQUENCE [LARGE SCALE GENOMIC DNA]</scope>
    <source>
        <strain>972 / ATCC 24843</strain>
    </source>
</reference>
<reference key="2">
    <citation type="journal article" date="2006" name="Nat. Biotechnol.">
        <title>ORFeome cloning and global analysis of protein localization in the fission yeast Schizosaccharomyces pombe.</title>
        <authorList>
            <person name="Matsuyama A."/>
            <person name="Arai R."/>
            <person name="Yashiroda Y."/>
            <person name="Shirai A."/>
            <person name="Kamata A."/>
            <person name="Sekido S."/>
            <person name="Kobayashi Y."/>
            <person name="Hashimoto A."/>
            <person name="Hamamoto M."/>
            <person name="Hiraoka Y."/>
            <person name="Horinouchi S."/>
            <person name="Yoshida M."/>
        </authorList>
    </citation>
    <scope>SUBCELLULAR LOCATION [LARGE SCALE ANALYSIS]</scope>
</reference>
<accession>O74734</accession>
<evidence type="ECO:0000250" key="1"/>
<evidence type="ECO:0000255" key="2"/>
<evidence type="ECO:0000269" key="3">
    <source>
    </source>
</evidence>
<evidence type="ECO:0000305" key="4"/>
<protein>
    <recommendedName>
        <fullName>Putative ribosomal recycling factor, mitochondrial</fullName>
    </recommendedName>
</protein>
<keyword id="KW-0496">Mitochondrion</keyword>
<keyword id="KW-0648">Protein biosynthesis</keyword>
<keyword id="KW-1185">Reference proteome</keyword>
<keyword id="KW-0809">Transit peptide</keyword>
<organism>
    <name type="scientific">Schizosaccharomyces pombe (strain 972 / ATCC 24843)</name>
    <name type="common">Fission yeast</name>
    <dbReference type="NCBI Taxonomy" id="284812"/>
    <lineage>
        <taxon>Eukaryota</taxon>
        <taxon>Fungi</taxon>
        <taxon>Dikarya</taxon>
        <taxon>Ascomycota</taxon>
        <taxon>Taphrinomycotina</taxon>
        <taxon>Schizosaccharomycetes</taxon>
        <taxon>Schizosaccharomycetales</taxon>
        <taxon>Schizosaccharomycetaceae</taxon>
        <taxon>Schizosaccharomyces</taxon>
    </lineage>
</organism>
<sequence length="244" mass="27688">MFRIISKATLFQDSQRFHTSILSPRCAFHNGGILHKKAKDKDVKHDHDPEFANSFNKMLKSFEAKMQLVHEKLAKRFQEAVVLPSQGNFTQLEALFIPSKSIKAPTPSRLLREIAAVSQKGSQQIIIRPFEDVDIKNILKAIEDSRYPFVANKLNASTIEVKPQRTTLESRQQLAKVLEGYAKDSREQLSAMRTELKKEIAKNKKSKAWTSDDCYKAEAEMQTAFKNAINLLDSGLKSALKKVI</sequence>
<gene>
    <name type="primary">rrf1</name>
    <name type="ORF">SPBC1709.09</name>
</gene>